<reference key="1">
    <citation type="journal article" date="2000" name="Appl. Environ. Microbiol.">
        <title>Molecular and functional analyses of the metC gene of Lactococcus lactis, encoding cystathionine beta-lyase.</title>
        <authorList>
            <person name="Fernandez M."/>
            <person name="van Doesburg W."/>
            <person name="Rutten G.A.M."/>
            <person name="Marugg J.D."/>
            <person name="Alting A.C."/>
            <person name="van Kranenburg R."/>
            <person name="Kuipers O.P."/>
        </authorList>
    </citation>
    <scope>NUCLEOTIDE SEQUENCE [GENOMIC DNA]</scope>
    <scope>CHARACTERIZATION</scope>
    <source>
        <strain>NIZO B78</strain>
    </source>
</reference>
<gene>
    <name type="primary">metC</name>
    <name type="synonym">metB2</name>
</gene>
<evidence type="ECO:0000250" key="1"/>
<evidence type="ECO:0000305" key="2"/>
<comment type="function">
    <text>The enzymatic degradation of amino acids in cheese is believed to generate aroma compounds and therefore to be essential for flavor development. Cystathionine beta-lyase (CBL) can convert cystathionine to homocysteine but is also able to catalyze an alpha, gamma elimination. With methionine as a substrate, it produces volatile sulfur compounds which are important for flavor formation in Gouda cheese.</text>
</comment>
<comment type="catalytic activity">
    <reaction>
        <text>L,L-cystathionine + H2O = L-homocysteine + pyruvate + NH4(+)</text>
        <dbReference type="Rhea" id="RHEA:13965"/>
        <dbReference type="ChEBI" id="CHEBI:15361"/>
        <dbReference type="ChEBI" id="CHEBI:15377"/>
        <dbReference type="ChEBI" id="CHEBI:28938"/>
        <dbReference type="ChEBI" id="CHEBI:58161"/>
        <dbReference type="ChEBI" id="CHEBI:58199"/>
    </reaction>
</comment>
<comment type="catalytic activity">
    <reaction>
        <text>an S-substituted L-cysteine + H2O = a thiol + pyruvate + NH4(+)</text>
        <dbReference type="Rhea" id="RHEA:18121"/>
        <dbReference type="ChEBI" id="CHEBI:15361"/>
        <dbReference type="ChEBI" id="CHEBI:15377"/>
        <dbReference type="ChEBI" id="CHEBI:28938"/>
        <dbReference type="ChEBI" id="CHEBI:29256"/>
        <dbReference type="ChEBI" id="CHEBI:58717"/>
        <dbReference type="EC" id="4.4.1.13"/>
    </reaction>
</comment>
<comment type="cofactor">
    <cofactor evidence="1">
        <name>pyridoxal 5'-phosphate</name>
        <dbReference type="ChEBI" id="CHEBI:597326"/>
    </cofactor>
</comment>
<comment type="pathway">
    <text>Amino-acid biosynthesis; L-methionine biosynthesis via de novo pathway; L-homocysteine from L-cystathionine: step 1/1.</text>
</comment>
<comment type="subcellular location">
    <subcellularLocation>
        <location>Cytoplasm</location>
    </subcellularLocation>
</comment>
<comment type="similarity">
    <text evidence="2">Belongs to the trans-sulfuration enzymes family.</text>
</comment>
<name>METC_LACLC</name>
<organism>
    <name type="scientific">Lactococcus lactis subsp. cremoris</name>
    <name type="common">Streptococcus cremoris</name>
    <dbReference type="NCBI Taxonomy" id="1359"/>
    <lineage>
        <taxon>Bacteria</taxon>
        <taxon>Bacillati</taxon>
        <taxon>Bacillota</taxon>
        <taxon>Bacilli</taxon>
        <taxon>Lactobacillales</taxon>
        <taxon>Streptococcaceae</taxon>
        <taxon>Lactococcus</taxon>
    </lineage>
</organism>
<dbReference type="EC" id="4.4.1.13"/>
<dbReference type="EMBL" id="AF131881">
    <property type="protein sequence ID" value="AAF14695.1"/>
    <property type="molecule type" value="Genomic_DNA"/>
</dbReference>
<dbReference type="SMR" id="P0C2T9"/>
<dbReference type="UniPathway" id="UPA00051">
    <property type="reaction ID" value="UER00078"/>
</dbReference>
<dbReference type="GO" id="GO:0005737">
    <property type="term" value="C:cytoplasm"/>
    <property type="evidence" value="ECO:0007669"/>
    <property type="project" value="UniProtKB-SubCell"/>
</dbReference>
<dbReference type="GO" id="GO:0004123">
    <property type="term" value="F:cystathionine gamma-lyase activity"/>
    <property type="evidence" value="ECO:0007669"/>
    <property type="project" value="TreeGrafter"/>
</dbReference>
<dbReference type="GO" id="GO:0003962">
    <property type="term" value="F:cystathionine gamma-synthase activity"/>
    <property type="evidence" value="ECO:0007669"/>
    <property type="project" value="TreeGrafter"/>
</dbReference>
<dbReference type="GO" id="GO:0047804">
    <property type="term" value="F:cysteine-S-conjugate beta-lyase activity"/>
    <property type="evidence" value="ECO:0007669"/>
    <property type="project" value="UniProtKB-EC"/>
</dbReference>
<dbReference type="GO" id="GO:0030170">
    <property type="term" value="F:pyridoxal phosphate binding"/>
    <property type="evidence" value="ECO:0007669"/>
    <property type="project" value="InterPro"/>
</dbReference>
<dbReference type="GO" id="GO:0019343">
    <property type="term" value="P:cysteine biosynthetic process via cystathionine"/>
    <property type="evidence" value="ECO:0007669"/>
    <property type="project" value="TreeGrafter"/>
</dbReference>
<dbReference type="GO" id="GO:0009086">
    <property type="term" value="P:methionine biosynthetic process"/>
    <property type="evidence" value="ECO:0007669"/>
    <property type="project" value="UniProtKB-KW"/>
</dbReference>
<dbReference type="GO" id="GO:0019346">
    <property type="term" value="P:transsulfuration"/>
    <property type="evidence" value="ECO:0007669"/>
    <property type="project" value="InterPro"/>
</dbReference>
<dbReference type="CDD" id="cd00614">
    <property type="entry name" value="CGS_like"/>
    <property type="match status" value="1"/>
</dbReference>
<dbReference type="FunFam" id="3.90.1150.10:FF:000008">
    <property type="entry name" value="Cystathionine gamma-synthase"/>
    <property type="match status" value="1"/>
</dbReference>
<dbReference type="FunFam" id="3.40.640.10:FF:000009">
    <property type="entry name" value="Cystathionine gamma-synthase homolog"/>
    <property type="match status" value="1"/>
</dbReference>
<dbReference type="Gene3D" id="3.90.1150.10">
    <property type="entry name" value="Aspartate Aminotransferase, domain 1"/>
    <property type="match status" value="1"/>
</dbReference>
<dbReference type="Gene3D" id="3.40.640.10">
    <property type="entry name" value="Type I PLP-dependent aspartate aminotransferase-like (Major domain)"/>
    <property type="match status" value="1"/>
</dbReference>
<dbReference type="InterPro" id="IPR000277">
    <property type="entry name" value="Cys/Met-Metab_PyrdxlP-dep_enz"/>
</dbReference>
<dbReference type="InterPro" id="IPR054542">
    <property type="entry name" value="Cys_met_metab_PP"/>
</dbReference>
<dbReference type="InterPro" id="IPR015424">
    <property type="entry name" value="PyrdxlP-dep_Trfase"/>
</dbReference>
<dbReference type="InterPro" id="IPR015421">
    <property type="entry name" value="PyrdxlP-dep_Trfase_major"/>
</dbReference>
<dbReference type="InterPro" id="IPR015422">
    <property type="entry name" value="PyrdxlP-dep_Trfase_small"/>
</dbReference>
<dbReference type="NCBIfam" id="NF004821">
    <property type="entry name" value="PRK06176.1"/>
    <property type="match status" value="1"/>
</dbReference>
<dbReference type="NCBIfam" id="NF005810">
    <property type="entry name" value="PRK07671.1"/>
    <property type="match status" value="1"/>
</dbReference>
<dbReference type="PANTHER" id="PTHR11808:SF15">
    <property type="entry name" value="CYSTATHIONINE GAMMA-LYASE"/>
    <property type="match status" value="1"/>
</dbReference>
<dbReference type="PANTHER" id="PTHR11808">
    <property type="entry name" value="TRANS-SULFURATION ENZYME FAMILY MEMBER"/>
    <property type="match status" value="1"/>
</dbReference>
<dbReference type="Pfam" id="PF01053">
    <property type="entry name" value="Cys_Met_Meta_PP"/>
    <property type="match status" value="1"/>
</dbReference>
<dbReference type="PIRSF" id="PIRSF001434">
    <property type="entry name" value="CGS"/>
    <property type="match status" value="1"/>
</dbReference>
<dbReference type="SUPFAM" id="SSF53383">
    <property type="entry name" value="PLP-dependent transferases"/>
    <property type="match status" value="1"/>
</dbReference>
<dbReference type="PROSITE" id="PS00868">
    <property type="entry name" value="CYS_MET_METAB_PP"/>
    <property type="match status" value="1"/>
</dbReference>
<keyword id="KW-0028">Amino-acid biosynthesis</keyword>
<keyword id="KW-0963">Cytoplasm</keyword>
<keyword id="KW-0456">Lyase</keyword>
<keyword id="KW-0486">Methionine biosynthesis</keyword>
<keyword id="KW-0663">Pyridoxal phosphate</keyword>
<accession>P0C2T9</accession>
<accession>P0A4K3</accession>
<accession>Q9RAS7</accession>
<accession>Q9RAS9</accession>
<proteinExistence type="evidence at protein level"/>
<sequence length="380" mass="40984">MTSLKTKVIHGGISTDRTTGAVSVPIYQTSTYKQNGLGQPKEYEYSRSGNPTRHALEELIADLEGGVQGFAFSSGLAGIHAVLSLFSAGDHIILADDVYGGTFRLVDKVLTKTGIIYDLVDLSNLEDLKAAFKAETKAVYFETPSNPLLKVLDIKEISSIAKAHNALTLVDNTFATPYLQQPIALGADIVLHSATKYLGGHSDVVAGLVTTNSNELAIEIGFLQNSIGAVLGPQDSWLVQRGIKTLAPRMEAHSANAQKIAEFLEASQAVSKVYYPGLVNHEGHEIAKKQMTAFGGMISFELTDENAVKNFVENLRYFTLAESLGGVESLIEVPAVMTHASIPKELREEIGIKDGLIRLSVGVEALEDLLTDLKEALEKE</sequence>
<protein>
    <recommendedName>
        <fullName>Cystathionine beta-lyase</fullName>
        <shortName>CBL</shortName>
        <ecNumber>4.4.1.13</ecNumber>
    </recommendedName>
    <alternativeName>
        <fullName>Beta-cystathionase</fullName>
    </alternativeName>
    <alternativeName>
        <fullName>Cysteine lyase</fullName>
    </alternativeName>
    <alternativeName>
        <fullName>Cysteine-S-conjugate beta-lyase</fullName>
    </alternativeName>
</protein>
<feature type="chain" id="PRO_0000114773" description="Cystathionine beta-lyase">
    <location>
        <begin position="1"/>
        <end position="380"/>
    </location>
</feature>
<feature type="modified residue" description="N6-(pyridoxal phosphate)lysine" evidence="1">
    <location>
        <position position="196"/>
    </location>
</feature>